<proteinExistence type="inferred from homology"/>
<evidence type="ECO:0000255" key="1">
    <source>
        <dbReference type="HAMAP-Rule" id="MF_00080"/>
    </source>
</evidence>
<keyword id="KW-0963">Cytoplasm</keyword>
<keyword id="KW-0396">Initiation factor</keyword>
<keyword id="KW-0648">Protein biosynthesis</keyword>
<sequence>MKIIAKKDLFINDEIRVREVRLVGLEGEQLGIKPLSEAQSLADASNVDLVLIQPQAVPPVAKLMDYGKFKFEYQKKQKEQRKKQSVVTVKEVRLSPVIDKGDFETKLRNGRKFLEKGNKVKVSIRFKGRMITHKEIGAKVLADFAEATQDIAIIEQRAKMDGRQMFMQLAPISDKK</sequence>
<gene>
    <name evidence="1" type="primary">infC</name>
    <name type="ordered locus">M28_Spy0598</name>
</gene>
<dbReference type="EMBL" id="CP000056">
    <property type="protein sequence ID" value="AAX71712.1"/>
    <property type="molecule type" value="Genomic_DNA"/>
</dbReference>
<dbReference type="RefSeq" id="WP_002985152.1">
    <property type="nucleotide sequence ID" value="NC_007296.2"/>
</dbReference>
<dbReference type="SMR" id="Q48U94"/>
<dbReference type="GeneID" id="69901077"/>
<dbReference type="KEGG" id="spb:M28_Spy0598"/>
<dbReference type="HOGENOM" id="CLU_054919_3_2_9"/>
<dbReference type="GO" id="GO:0005829">
    <property type="term" value="C:cytosol"/>
    <property type="evidence" value="ECO:0007669"/>
    <property type="project" value="TreeGrafter"/>
</dbReference>
<dbReference type="GO" id="GO:0016020">
    <property type="term" value="C:membrane"/>
    <property type="evidence" value="ECO:0007669"/>
    <property type="project" value="TreeGrafter"/>
</dbReference>
<dbReference type="GO" id="GO:0043022">
    <property type="term" value="F:ribosome binding"/>
    <property type="evidence" value="ECO:0007669"/>
    <property type="project" value="TreeGrafter"/>
</dbReference>
<dbReference type="GO" id="GO:0003743">
    <property type="term" value="F:translation initiation factor activity"/>
    <property type="evidence" value="ECO:0007669"/>
    <property type="project" value="UniProtKB-UniRule"/>
</dbReference>
<dbReference type="GO" id="GO:0032790">
    <property type="term" value="P:ribosome disassembly"/>
    <property type="evidence" value="ECO:0007669"/>
    <property type="project" value="TreeGrafter"/>
</dbReference>
<dbReference type="FunFam" id="3.10.20.80:FF:000001">
    <property type="entry name" value="Translation initiation factor IF-3"/>
    <property type="match status" value="1"/>
</dbReference>
<dbReference type="FunFam" id="3.30.110.10:FF:000001">
    <property type="entry name" value="Translation initiation factor IF-3"/>
    <property type="match status" value="1"/>
</dbReference>
<dbReference type="Gene3D" id="3.30.110.10">
    <property type="entry name" value="Translation initiation factor 3 (IF-3), C-terminal domain"/>
    <property type="match status" value="1"/>
</dbReference>
<dbReference type="Gene3D" id="3.10.20.80">
    <property type="entry name" value="Translation initiation factor 3 (IF-3), N-terminal domain"/>
    <property type="match status" value="1"/>
</dbReference>
<dbReference type="HAMAP" id="MF_00080">
    <property type="entry name" value="IF_3"/>
    <property type="match status" value="1"/>
</dbReference>
<dbReference type="InterPro" id="IPR036788">
    <property type="entry name" value="T_IF-3_C_sf"/>
</dbReference>
<dbReference type="InterPro" id="IPR036787">
    <property type="entry name" value="T_IF-3_N_sf"/>
</dbReference>
<dbReference type="InterPro" id="IPR019813">
    <property type="entry name" value="Translation_initiation_fac3_CS"/>
</dbReference>
<dbReference type="InterPro" id="IPR001288">
    <property type="entry name" value="Translation_initiation_fac_3"/>
</dbReference>
<dbReference type="InterPro" id="IPR019815">
    <property type="entry name" value="Translation_initiation_fac_3_C"/>
</dbReference>
<dbReference type="InterPro" id="IPR019814">
    <property type="entry name" value="Translation_initiation_fac_3_N"/>
</dbReference>
<dbReference type="NCBIfam" id="TIGR00168">
    <property type="entry name" value="infC"/>
    <property type="match status" value="1"/>
</dbReference>
<dbReference type="PANTHER" id="PTHR10938">
    <property type="entry name" value="TRANSLATION INITIATION FACTOR IF-3"/>
    <property type="match status" value="1"/>
</dbReference>
<dbReference type="PANTHER" id="PTHR10938:SF0">
    <property type="entry name" value="TRANSLATION INITIATION FACTOR IF-3, MITOCHONDRIAL"/>
    <property type="match status" value="1"/>
</dbReference>
<dbReference type="Pfam" id="PF00707">
    <property type="entry name" value="IF3_C"/>
    <property type="match status" value="1"/>
</dbReference>
<dbReference type="Pfam" id="PF05198">
    <property type="entry name" value="IF3_N"/>
    <property type="match status" value="1"/>
</dbReference>
<dbReference type="SUPFAM" id="SSF55200">
    <property type="entry name" value="Translation initiation factor IF3, C-terminal domain"/>
    <property type="match status" value="1"/>
</dbReference>
<dbReference type="SUPFAM" id="SSF54364">
    <property type="entry name" value="Translation initiation factor IF3, N-terminal domain"/>
    <property type="match status" value="1"/>
</dbReference>
<dbReference type="PROSITE" id="PS00938">
    <property type="entry name" value="IF3"/>
    <property type="match status" value="1"/>
</dbReference>
<comment type="function">
    <text evidence="1">IF-3 binds to the 30S ribosomal subunit and shifts the equilibrium between 70S ribosomes and their 50S and 30S subunits in favor of the free subunits, thus enhancing the availability of 30S subunits on which protein synthesis initiation begins.</text>
</comment>
<comment type="subunit">
    <text evidence="1">Monomer.</text>
</comment>
<comment type="subcellular location">
    <subcellularLocation>
        <location evidence="1">Cytoplasm</location>
    </subcellularLocation>
</comment>
<comment type="similarity">
    <text evidence="1">Belongs to the IF-3 family.</text>
</comment>
<protein>
    <recommendedName>
        <fullName evidence="1">Translation initiation factor IF-3</fullName>
    </recommendedName>
</protein>
<reference key="1">
    <citation type="journal article" date="2005" name="J. Infect. Dis.">
        <title>Genome sequence of a serotype M28 strain of group A Streptococcus: potential new insights into puerperal sepsis and bacterial disease specificity.</title>
        <authorList>
            <person name="Green N.M."/>
            <person name="Zhang S."/>
            <person name="Porcella S.F."/>
            <person name="Nagiec M.J."/>
            <person name="Barbian K.D."/>
            <person name="Beres S.B."/>
            <person name="Lefebvre R.B."/>
            <person name="Musser J.M."/>
        </authorList>
    </citation>
    <scope>NUCLEOTIDE SEQUENCE [LARGE SCALE GENOMIC DNA]</scope>
    <source>
        <strain>MGAS6180</strain>
    </source>
</reference>
<feature type="chain" id="PRO_1000004577" description="Translation initiation factor IF-3">
    <location>
        <begin position="1"/>
        <end position="176"/>
    </location>
</feature>
<organism>
    <name type="scientific">Streptococcus pyogenes serotype M28 (strain MGAS6180)</name>
    <dbReference type="NCBI Taxonomy" id="319701"/>
    <lineage>
        <taxon>Bacteria</taxon>
        <taxon>Bacillati</taxon>
        <taxon>Bacillota</taxon>
        <taxon>Bacilli</taxon>
        <taxon>Lactobacillales</taxon>
        <taxon>Streptococcaceae</taxon>
        <taxon>Streptococcus</taxon>
    </lineage>
</organism>
<name>IF3_STRPM</name>
<accession>Q48U94</accession>